<comment type="function">
    <text evidence="1 2">Metal-dependent phosphatase that shows phosphatase activity against several substrates, including fructose-1-phosphate and fructose-6-phosphate (By similarity). Its preference for fructose-1-phosphate, a strong glycating agent that causes DNA damage rather than a canonical yeast metabolite, suggests a damage-control function in hexose phosphate metabolism (By similarity). Has also been shown to have O-methyltransferase activity that methylates glutamate residues of target proteins to form gamma-glutamyl methyl ester residues (By similarity). Possibly methylates PCNA, suggesting it is involved in the DNA damage response (By similarity).</text>
</comment>
<comment type="catalytic activity">
    <reaction evidence="1">
        <text>beta-D-fructose 1-phosphate + H2O = D-fructose + phosphate</text>
        <dbReference type="Rhea" id="RHEA:35603"/>
        <dbReference type="ChEBI" id="CHEBI:15377"/>
        <dbReference type="ChEBI" id="CHEBI:37721"/>
        <dbReference type="ChEBI" id="CHEBI:43474"/>
        <dbReference type="ChEBI" id="CHEBI:138881"/>
    </reaction>
</comment>
<comment type="catalytic activity">
    <reaction evidence="1">
        <text>beta-D-fructose 6-phosphate = dihydroxyacetone + D-glyceraldehyde 3-phosphate</text>
        <dbReference type="Rhea" id="RHEA:28002"/>
        <dbReference type="ChEBI" id="CHEBI:16016"/>
        <dbReference type="ChEBI" id="CHEBI:57634"/>
        <dbReference type="ChEBI" id="CHEBI:59776"/>
    </reaction>
</comment>
<comment type="catalytic activity">
    <reaction evidence="2">
        <text>L-glutamyl-[protein] + S-adenosyl-L-methionine = [protein]-L-glutamate 5-O-methyl ester + S-adenosyl-L-homocysteine</text>
        <dbReference type="Rhea" id="RHEA:24452"/>
        <dbReference type="Rhea" id="RHEA-COMP:10208"/>
        <dbReference type="Rhea" id="RHEA-COMP:10311"/>
        <dbReference type="ChEBI" id="CHEBI:29973"/>
        <dbReference type="ChEBI" id="CHEBI:57856"/>
        <dbReference type="ChEBI" id="CHEBI:59789"/>
        <dbReference type="ChEBI" id="CHEBI:82795"/>
    </reaction>
</comment>
<comment type="cofactor">
    <cofactor evidence="1">
        <name>Mn(2+)</name>
        <dbReference type="ChEBI" id="CHEBI:29035"/>
    </cofactor>
    <cofactor evidence="1">
        <name>Ni(2+)</name>
        <dbReference type="ChEBI" id="CHEBI:49786"/>
    </cofactor>
</comment>
<comment type="domain">
    <text evidence="1">Subfamily III proteins have a conserved RTxK motif about 40-50 residues from the C-terminus; the threonine may be replaced by serine or cysteine.</text>
</comment>
<comment type="PTM">
    <text evidence="2">Automethylated.</text>
</comment>
<comment type="similarity">
    <text evidence="3">Belongs to the damage-control phosphatase family. Sugar phosphate phosphatase III subfamily.</text>
</comment>
<comment type="caution">
    <text evidence="2">Human C6orf211 has been reportedly associated with a protein carboxyl methyltransferase activity, but whether this protein indeed has such an activity remains to be determined (By similarity). It has been later shown to belong to a family of metal-dependent phosphatases implicated in metabolite damage-control (By similarity).</text>
</comment>
<protein>
    <recommendedName>
        <fullName evidence="1">Damage-control phosphatase ARMT1</fullName>
        <ecNumber evidence="1">3.1.3.-</ecNumber>
    </recommendedName>
    <alternativeName>
        <fullName evidence="2">Acidic residue methyltransferase 1</fullName>
    </alternativeName>
    <alternativeName>
        <fullName evidence="2">Protein-glutamate O-methyltransferase</fullName>
        <ecNumber evidence="2">2.1.1.-</ecNumber>
    </alternativeName>
    <alternativeName>
        <fullName evidence="1">Sugar phosphate phosphatase ARMT1</fullName>
    </alternativeName>
</protein>
<keyword id="KW-0378">Hydrolase</keyword>
<keyword id="KW-0464">Manganese</keyword>
<keyword id="KW-0479">Metal-binding</keyword>
<keyword id="KW-0489">Methyltransferase</keyword>
<keyword id="KW-0533">Nickel</keyword>
<keyword id="KW-1185">Reference proteome</keyword>
<keyword id="KW-0949">S-adenosyl-L-methionine</keyword>
<keyword id="KW-0808">Transferase</keyword>
<reference key="1">
    <citation type="submission" date="2004-06" db="EMBL/GenBank/DDBJ databases">
        <authorList>
            <consortium name="NIH - Xenopus Gene Collection (XGC) project"/>
        </authorList>
    </citation>
    <scope>NUCLEOTIDE SEQUENCE [LARGE SCALE MRNA]</scope>
</reference>
<evidence type="ECO:0000250" key="1">
    <source>
        <dbReference type="UniProtKB" id="Q04371"/>
    </source>
</evidence>
<evidence type="ECO:0000250" key="2">
    <source>
        <dbReference type="UniProtKB" id="Q9H993"/>
    </source>
</evidence>
<evidence type="ECO:0000305" key="3"/>
<name>ARMT1_XENTR</name>
<sequence>MDPPCSLSARFEGSFAYLTIRDRLPQILTKVIDTVHRNKNKFFEDNGEEGVEAEKKALSFFSKLRNEIQTDKPVLPLTDNQSDTELWNQYLDYQKTLLNKGETPSWFKSPWLYVECYMYRRIQEGLVLSPPISEYDVFREGKTESFFQSQPAIIALCTYLQELKNNVANLSENQKKEELSKLLQVCLWGNKCDLSISGGLDNSQKFSILSSLESFMPFILVNDMESVWAVLSGSKNLESGKELMKRVDIVLDNAGFELITDFVLADALLSLRLASEVHFHAKCMPWFVSDTTKHDFNWTIKHLQAANHKWMSKCGVNWKENLQRSCWIYHEHLFWTLPHEFCMMAQTAPDLYSELQKSDLVIFKGDLNYRKLTGDRKWEFTVPFFQALTTFHPAPLCSIRTLKADVQVGLKPGVGEQLSSNEPDWMISGKYGVVQLSTSV</sequence>
<gene>
    <name evidence="2" type="primary">armt1</name>
</gene>
<dbReference type="EC" id="3.1.3.-" evidence="1"/>
<dbReference type="EC" id="2.1.1.-" evidence="2"/>
<dbReference type="EMBL" id="BC075279">
    <property type="protein sequence ID" value="AAH75279.1"/>
    <property type="molecule type" value="mRNA"/>
</dbReference>
<dbReference type="RefSeq" id="NP_001004883.1">
    <property type="nucleotide sequence ID" value="NM_001004883.1"/>
</dbReference>
<dbReference type="RefSeq" id="XP_031753670.1">
    <property type="nucleotide sequence ID" value="XM_031897810.1"/>
</dbReference>
<dbReference type="SMR" id="Q6DJA3"/>
<dbReference type="FunCoup" id="Q6DJA3">
    <property type="interactions" value="2038"/>
</dbReference>
<dbReference type="STRING" id="8364.ENSXETP00000048324"/>
<dbReference type="PaxDb" id="8364-ENSXETP00000018556"/>
<dbReference type="GeneID" id="448220"/>
<dbReference type="KEGG" id="xtr:448220"/>
<dbReference type="AGR" id="Xenbase:XB-GENE-970980"/>
<dbReference type="CTD" id="79624"/>
<dbReference type="Xenbase" id="XB-GENE-970980">
    <property type="gene designation" value="armt1"/>
</dbReference>
<dbReference type="eggNOG" id="KOG3870">
    <property type="taxonomic scope" value="Eukaryota"/>
</dbReference>
<dbReference type="HOGENOM" id="CLU_030117_2_1_1"/>
<dbReference type="InParanoid" id="Q6DJA3"/>
<dbReference type="OMA" id="IFARQKM"/>
<dbReference type="OrthoDB" id="541375at2759"/>
<dbReference type="PhylomeDB" id="Q6DJA3"/>
<dbReference type="Proteomes" id="UP000008143">
    <property type="component" value="Chromosome 3"/>
</dbReference>
<dbReference type="GO" id="GO:0097023">
    <property type="term" value="F:fructose 6-phosphate aldolase activity"/>
    <property type="evidence" value="ECO:0007669"/>
    <property type="project" value="RHEA"/>
</dbReference>
<dbReference type="GO" id="GO:0103026">
    <property type="term" value="F:fructose-1-phosphatase activity"/>
    <property type="evidence" value="ECO:0007669"/>
    <property type="project" value="RHEA"/>
</dbReference>
<dbReference type="GO" id="GO:0046872">
    <property type="term" value="F:metal ion binding"/>
    <property type="evidence" value="ECO:0007669"/>
    <property type="project" value="UniProtKB-KW"/>
</dbReference>
<dbReference type="GO" id="GO:0051998">
    <property type="term" value="F:protein carboxyl O-methyltransferase activity"/>
    <property type="evidence" value="ECO:0000250"/>
    <property type="project" value="UniProtKB"/>
</dbReference>
<dbReference type="GO" id="GO:0008983">
    <property type="term" value="F:protein-glutamate O-methyltransferase activity"/>
    <property type="evidence" value="ECO:0007669"/>
    <property type="project" value="RHEA"/>
</dbReference>
<dbReference type="GO" id="GO:0008757">
    <property type="term" value="F:S-adenosylmethionine-dependent methyltransferase activity"/>
    <property type="evidence" value="ECO:0000250"/>
    <property type="project" value="UniProtKB"/>
</dbReference>
<dbReference type="GO" id="GO:0006974">
    <property type="term" value="P:DNA damage response"/>
    <property type="evidence" value="ECO:0000250"/>
    <property type="project" value="UniProtKB"/>
</dbReference>
<dbReference type="GO" id="GO:0032259">
    <property type="term" value="P:methylation"/>
    <property type="evidence" value="ECO:0007669"/>
    <property type="project" value="UniProtKB-KW"/>
</dbReference>
<dbReference type="FunFam" id="3.40.50.10880:FF:000002">
    <property type="entry name" value="Acidic residue methyltransferase 1"/>
    <property type="match status" value="1"/>
</dbReference>
<dbReference type="FunFam" id="1.20.930.60:FF:000001">
    <property type="entry name" value="protein-glutamate O-methyltransferase isoform X1"/>
    <property type="match status" value="1"/>
</dbReference>
<dbReference type="Gene3D" id="1.20.930.60">
    <property type="match status" value="1"/>
</dbReference>
<dbReference type="Gene3D" id="3.40.50.10880">
    <property type="entry name" value="Uncharacterised protein PF01937, DUF89, domain 3"/>
    <property type="match status" value="1"/>
</dbReference>
<dbReference type="InterPro" id="IPR036075">
    <property type="entry name" value="ARMT-1-like_metal-bd_sf"/>
</dbReference>
<dbReference type="InterPro" id="IPR039763">
    <property type="entry name" value="ARMT1"/>
</dbReference>
<dbReference type="InterPro" id="IPR002791">
    <property type="entry name" value="ARMT1-like_metal-bd"/>
</dbReference>
<dbReference type="PANTHER" id="PTHR12260">
    <property type="entry name" value="DAMAGE-CONTROL PHOSPHATASE ARMT1"/>
    <property type="match status" value="1"/>
</dbReference>
<dbReference type="PANTHER" id="PTHR12260:SF6">
    <property type="entry name" value="DAMAGE-CONTROL PHOSPHATASE ARMT1"/>
    <property type="match status" value="1"/>
</dbReference>
<dbReference type="Pfam" id="PF01937">
    <property type="entry name" value="ARMT1-like_dom"/>
    <property type="match status" value="1"/>
</dbReference>
<dbReference type="SUPFAM" id="SSF111321">
    <property type="entry name" value="AF1104-like"/>
    <property type="match status" value="1"/>
</dbReference>
<accession>Q6DJA3</accession>
<organism>
    <name type="scientific">Xenopus tropicalis</name>
    <name type="common">Western clawed frog</name>
    <name type="synonym">Silurana tropicalis</name>
    <dbReference type="NCBI Taxonomy" id="8364"/>
    <lineage>
        <taxon>Eukaryota</taxon>
        <taxon>Metazoa</taxon>
        <taxon>Chordata</taxon>
        <taxon>Craniata</taxon>
        <taxon>Vertebrata</taxon>
        <taxon>Euteleostomi</taxon>
        <taxon>Amphibia</taxon>
        <taxon>Batrachia</taxon>
        <taxon>Anura</taxon>
        <taxon>Pipoidea</taxon>
        <taxon>Pipidae</taxon>
        <taxon>Xenopodinae</taxon>
        <taxon>Xenopus</taxon>
        <taxon>Silurana</taxon>
    </lineage>
</organism>
<feature type="chain" id="PRO_0000358927" description="Damage-control phosphatase ARMT1">
    <location>
        <begin position="1"/>
        <end position="440"/>
    </location>
</feature>
<feature type="short sequence motif" description="Subfamily III RTxK motif" evidence="1">
    <location>
        <begin position="400"/>
        <end position="403"/>
    </location>
</feature>
<feature type="binding site" evidence="1">
    <location>
        <begin position="252"/>
        <end position="253"/>
    </location>
    <ligand>
        <name>substrate</name>
    </ligand>
</feature>
<feature type="binding site" evidence="1">
    <location>
        <position position="252"/>
    </location>
    <ligand>
        <name>Mn(2+)</name>
        <dbReference type="ChEBI" id="CHEBI:29035"/>
        <note>catalytic</note>
    </ligand>
</feature>
<feature type="binding site" evidence="1">
    <location>
        <position position="253"/>
    </location>
    <ligand>
        <name>Mn(2+)</name>
        <dbReference type="ChEBI" id="CHEBI:29035"/>
        <note>catalytic</note>
    </ligand>
</feature>
<feature type="binding site" evidence="2">
    <location>
        <position position="257"/>
    </location>
    <ligand>
        <name>S-adenosyl-L-methionine</name>
        <dbReference type="ChEBI" id="CHEBI:59789"/>
    </ligand>
</feature>
<feature type="binding site" evidence="1">
    <location>
        <position position="290"/>
    </location>
    <ligand>
        <name>Mn(2+)</name>
        <dbReference type="ChEBI" id="CHEBI:29035"/>
        <note>catalytic</note>
    </ligand>
</feature>
<feature type="binding site" evidence="2">
    <location>
        <position position="290"/>
    </location>
    <ligand>
        <name>S-adenosyl-L-methionine</name>
        <dbReference type="ChEBI" id="CHEBI:59789"/>
    </ligand>
</feature>
<feature type="binding site" evidence="1">
    <location>
        <begin position="366"/>
        <end position="370"/>
    </location>
    <ligand>
        <name>substrate</name>
    </ligand>
</feature>
<feature type="binding site" evidence="1">
    <location>
        <position position="403"/>
    </location>
    <ligand>
        <name>substrate</name>
    </ligand>
</feature>
<proteinExistence type="evidence at transcript level"/>